<accession>Q8CHL0</accession>
<evidence type="ECO:0000250" key="1"/>
<evidence type="ECO:0000250" key="2">
    <source>
        <dbReference type="UniProtKB" id="Q13467"/>
    </source>
</evidence>
<evidence type="ECO:0000250" key="3">
    <source>
        <dbReference type="UniProtKB" id="Q9EQD0"/>
    </source>
</evidence>
<evidence type="ECO:0000255" key="4"/>
<evidence type="ECO:0000255" key="5">
    <source>
        <dbReference type="PROSITE-ProRule" id="PRU00090"/>
    </source>
</evidence>
<evidence type="ECO:0000256" key="6">
    <source>
        <dbReference type="SAM" id="MobiDB-lite"/>
    </source>
</evidence>
<evidence type="ECO:0000269" key="7">
    <source>
    </source>
</evidence>
<evidence type="ECO:0000305" key="8"/>
<proteinExistence type="evidence at transcript level"/>
<sequence length="585" mass="64112">MARPDPSAPPSLLLLLLAQLVGRAAAASKAPVCQEITVPMCRGIGYNLTHMPNQFNHDTQDEAGLEVHQFWPLVEIHCSPDLRFFLCSMYTPICLPDYHKPLPPCRSVCERAKAGCSPLMRQYGFAWPERMSCDRLPVLGGDAEVLCMDYNRSEATTASPKSFPAKPTLPGPPGAPSSGGECPSGGPSVCTCREPFVPILKESHPLYNKVRTGQVPNCAVPCYQPSFSPDERTFATFWIGLWSVLCFISTSTTVATFLIDMERFRYPERPIIFLSACYLCVSLGFLVRLVVGHASVACSREHSHIHYETTGPALCTVVFLLVYFFGMASSIWWVILSLTWFLAAGMKWGNEAIAGYAQYFHLAAWLIPSVKSITALALSSVDGDPVAGVCYVGNQNLNSLRGFVLGPLVLYLLVGTLFLLAGFVSLFRIRSVIKQGGTKTDKLEKLMIRIGIFTLLYTVPASIVVACYLYEQHYRESWEAALTCACPGSDAGQPRAKPEYWVLMLKYFMCLVVGITSGVWIWSGKTLESWRRFTSRCCCSSRRGHKSGGAMVAGDYAEASAALTGRTGPPGPAAAYHKQVSLSHV</sequence>
<gene>
    <name type="primary">Fzd5</name>
</gene>
<feature type="signal peptide" evidence="4">
    <location>
        <begin position="1"/>
        <end position="26"/>
    </location>
</feature>
<feature type="chain" id="PRO_0000243937" description="Frizzled-5">
    <location>
        <begin position="27"/>
        <end position="585"/>
    </location>
</feature>
<feature type="topological domain" description="Extracellular" evidence="4">
    <location>
        <begin position="27"/>
        <end position="238"/>
    </location>
</feature>
<feature type="transmembrane region" description="Helical; Name=1" evidence="4">
    <location>
        <begin position="239"/>
        <end position="259"/>
    </location>
</feature>
<feature type="topological domain" description="Cytoplasmic" evidence="4">
    <location>
        <begin position="260"/>
        <end position="270"/>
    </location>
</feature>
<feature type="transmembrane region" description="Helical; Name=2" evidence="4">
    <location>
        <begin position="271"/>
        <end position="291"/>
    </location>
</feature>
<feature type="topological domain" description="Extracellular" evidence="4">
    <location>
        <begin position="292"/>
        <end position="315"/>
    </location>
</feature>
<feature type="transmembrane region" description="Helical; Name=3" evidence="4">
    <location>
        <begin position="316"/>
        <end position="336"/>
    </location>
</feature>
<feature type="topological domain" description="Cytoplasmic" evidence="4">
    <location>
        <begin position="337"/>
        <end position="358"/>
    </location>
</feature>
<feature type="transmembrane region" description="Helical; Name=4" evidence="4">
    <location>
        <begin position="359"/>
        <end position="379"/>
    </location>
</feature>
<feature type="topological domain" description="Extracellular" evidence="4">
    <location>
        <begin position="380"/>
        <end position="402"/>
    </location>
</feature>
<feature type="transmembrane region" description="Helical; Name=5" evidence="4">
    <location>
        <begin position="403"/>
        <end position="423"/>
    </location>
</feature>
<feature type="topological domain" description="Cytoplasmic" evidence="4">
    <location>
        <begin position="424"/>
        <end position="449"/>
    </location>
</feature>
<feature type="transmembrane region" description="Helical; Name=6" evidence="4">
    <location>
        <begin position="450"/>
        <end position="470"/>
    </location>
</feature>
<feature type="topological domain" description="Extracellular" evidence="4">
    <location>
        <begin position="471"/>
        <end position="500"/>
    </location>
</feature>
<feature type="transmembrane region" description="Helical; Name=7" evidence="4">
    <location>
        <begin position="501"/>
        <end position="521"/>
    </location>
</feature>
<feature type="topological domain" description="Cytoplasmic" evidence="4">
    <location>
        <begin position="522"/>
        <end position="585"/>
    </location>
</feature>
<feature type="domain" description="FZ" evidence="5">
    <location>
        <begin position="28"/>
        <end position="150"/>
    </location>
</feature>
<feature type="region of interest" description="Disordered" evidence="6">
    <location>
        <begin position="156"/>
        <end position="182"/>
    </location>
</feature>
<feature type="short sequence motif" description="Lys-Thr-X-X-X-Trp motif, mediates interaction with the PDZ domain of Dvl family members" evidence="1">
    <location>
        <begin position="525"/>
        <end position="530"/>
    </location>
</feature>
<feature type="short sequence motif" description="PDZ-binding" evidence="1">
    <location>
        <begin position="583"/>
        <end position="585"/>
    </location>
</feature>
<feature type="glycosylation site" description="N-linked (GlcNAc...) asparagine" evidence="4">
    <location>
        <position position="47"/>
    </location>
</feature>
<feature type="glycosylation site" description="N-linked (GlcNAc...) asparagine" evidence="4">
    <location>
        <position position="151"/>
    </location>
</feature>
<feature type="disulfide bond" evidence="5">
    <location>
        <begin position="33"/>
        <end position="94"/>
    </location>
</feature>
<feature type="disulfide bond" evidence="5">
    <location>
        <begin position="41"/>
        <end position="87"/>
    </location>
</feature>
<feature type="disulfide bond" evidence="5">
    <location>
        <begin position="78"/>
        <end position="116"/>
    </location>
</feature>
<feature type="disulfide bond" evidence="5">
    <location>
        <begin position="105"/>
        <end position="147"/>
    </location>
</feature>
<feature type="disulfide bond" evidence="5">
    <location>
        <begin position="109"/>
        <end position="133"/>
    </location>
</feature>
<dbReference type="EMBL" id="AB052909">
    <property type="protein sequence ID" value="BAC53980.1"/>
    <property type="molecule type" value="mRNA"/>
</dbReference>
<dbReference type="RefSeq" id="NP_776210.1">
    <property type="nucleotide sequence ID" value="NM_173838.1"/>
</dbReference>
<dbReference type="SMR" id="Q8CHL0"/>
<dbReference type="FunCoup" id="Q8CHL0">
    <property type="interactions" value="549"/>
</dbReference>
<dbReference type="STRING" id="10116.ENSRNOP00000070441"/>
<dbReference type="GlyCosmos" id="Q8CHL0">
    <property type="glycosylation" value="2 sites, No reported glycans"/>
</dbReference>
<dbReference type="GlyGen" id="Q8CHL0">
    <property type="glycosylation" value="2 sites"/>
</dbReference>
<dbReference type="iPTMnet" id="Q8CHL0"/>
<dbReference type="PhosphoSitePlus" id="Q8CHL0"/>
<dbReference type="SwissPalm" id="Q8CHL0"/>
<dbReference type="GeneID" id="317674"/>
<dbReference type="KEGG" id="rno:317674"/>
<dbReference type="UCSC" id="RGD:631406">
    <property type="organism name" value="rat"/>
</dbReference>
<dbReference type="AGR" id="RGD:631406"/>
<dbReference type="CTD" id="7855"/>
<dbReference type="RGD" id="631406">
    <property type="gene designation" value="Fzd5"/>
</dbReference>
<dbReference type="InParanoid" id="Q8CHL0"/>
<dbReference type="PhylomeDB" id="Q8CHL0"/>
<dbReference type="Reactome" id="R-RNO-4086398">
    <property type="pathway name" value="Ca2+ pathway"/>
</dbReference>
<dbReference type="Reactome" id="R-RNO-4608870">
    <property type="pathway name" value="Asymmetric localization of PCP proteins"/>
</dbReference>
<dbReference type="Reactome" id="R-RNO-4641262">
    <property type="pathway name" value="Disassembly of the destruction complex and recruitment of AXIN to the membrane"/>
</dbReference>
<dbReference type="Reactome" id="R-RNO-4641263">
    <property type="pathway name" value="Regulation of FZD by ubiquitination"/>
</dbReference>
<dbReference type="Reactome" id="R-RNO-5140745">
    <property type="pathway name" value="WNT5A-dependent internalization of FZD2, FZD5 and ROR2"/>
</dbReference>
<dbReference type="PRO" id="PR:Q8CHL0"/>
<dbReference type="Proteomes" id="UP000002494">
    <property type="component" value="Unplaced"/>
</dbReference>
<dbReference type="GO" id="GO:0030424">
    <property type="term" value="C:axon"/>
    <property type="evidence" value="ECO:0007669"/>
    <property type="project" value="UniProtKB-SubCell"/>
</dbReference>
<dbReference type="GO" id="GO:0005923">
    <property type="term" value="C:bicellular tight junction"/>
    <property type="evidence" value="ECO:0000266"/>
    <property type="project" value="RGD"/>
</dbReference>
<dbReference type="GO" id="GO:0009986">
    <property type="term" value="C:cell surface"/>
    <property type="evidence" value="ECO:0000266"/>
    <property type="project" value="RGD"/>
</dbReference>
<dbReference type="GO" id="GO:0030425">
    <property type="term" value="C:dendrite"/>
    <property type="evidence" value="ECO:0007669"/>
    <property type="project" value="UniProtKB-SubCell"/>
</dbReference>
<dbReference type="GO" id="GO:0005769">
    <property type="term" value="C:early endosome"/>
    <property type="evidence" value="ECO:0000266"/>
    <property type="project" value="RGD"/>
</dbReference>
<dbReference type="GO" id="GO:0098978">
    <property type="term" value="C:glutamatergic synapse"/>
    <property type="evidence" value="ECO:0000314"/>
    <property type="project" value="SynGO"/>
</dbReference>
<dbReference type="GO" id="GO:0005794">
    <property type="term" value="C:Golgi apparatus"/>
    <property type="evidence" value="ECO:0000266"/>
    <property type="project" value="RGD"/>
</dbReference>
<dbReference type="GO" id="GO:0000139">
    <property type="term" value="C:Golgi membrane"/>
    <property type="evidence" value="ECO:0007669"/>
    <property type="project" value="UniProtKB-SubCell"/>
</dbReference>
<dbReference type="GO" id="GO:0043204">
    <property type="term" value="C:perikaryon"/>
    <property type="evidence" value="ECO:0007669"/>
    <property type="project" value="UniProtKB-SubCell"/>
</dbReference>
<dbReference type="GO" id="GO:0048471">
    <property type="term" value="C:perinuclear region of cytoplasm"/>
    <property type="evidence" value="ECO:0000266"/>
    <property type="project" value="RGD"/>
</dbReference>
<dbReference type="GO" id="GO:0005886">
    <property type="term" value="C:plasma membrane"/>
    <property type="evidence" value="ECO:0000250"/>
    <property type="project" value="UniProtKB"/>
</dbReference>
<dbReference type="GO" id="GO:0045202">
    <property type="term" value="C:synapse"/>
    <property type="evidence" value="ECO:0000314"/>
    <property type="project" value="SynGO"/>
</dbReference>
<dbReference type="GO" id="GO:0001540">
    <property type="term" value="F:amyloid-beta binding"/>
    <property type="evidence" value="ECO:0000266"/>
    <property type="project" value="RGD"/>
</dbReference>
<dbReference type="GO" id="GO:0004930">
    <property type="term" value="F:G protein-coupled receptor activity"/>
    <property type="evidence" value="ECO:0007669"/>
    <property type="project" value="UniProtKB-KW"/>
</dbReference>
<dbReference type="GO" id="GO:0008289">
    <property type="term" value="F:lipid binding"/>
    <property type="evidence" value="ECO:0007669"/>
    <property type="project" value="UniProtKB-KW"/>
</dbReference>
<dbReference type="GO" id="GO:0019901">
    <property type="term" value="F:protein kinase binding"/>
    <property type="evidence" value="ECO:0000266"/>
    <property type="project" value="RGD"/>
</dbReference>
<dbReference type="GO" id="GO:0044877">
    <property type="term" value="F:protein-containing complex binding"/>
    <property type="evidence" value="ECO:0000266"/>
    <property type="project" value="RGD"/>
</dbReference>
<dbReference type="GO" id="GO:0031625">
    <property type="term" value="F:ubiquitin protein ligase binding"/>
    <property type="evidence" value="ECO:0000266"/>
    <property type="project" value="RGD"/>
</dbReference>
<dbReference type="GO" id="GO:0042813">
    <property type="term" value="F:Wnt receptor activity"/>
    <property type="evidence" value="ECO:0000250"/>
    <property type="project" value="UniProtKB"/>
</dbReference>
<dbReference type="GO" id="GO:0017147">
    <property type="term" value="F:Wnt-protein binding"/>
    <property type="evidence" value="ECO:0000353"/>
    <property type="project" value="RGD"/>
</dbReference>
<dbReference type="GO" id="GO:0001525">
    <property type="term" value="P:angiogenesis"/>
    <property type="evidence" value="ECO:0000266"/>
    <property type="project" value="RGD"/>
</dbReference>
<dbReference type="GO" id="GO:0008595">
    <property type="term" value="P:anterior/posterior axis specification, embryo"/>
    <property type="evidence" value="ECO:0000266"/>
    <property type="project" value="RGD"/>
</dbReference>
<dbReference type="GO" id="GO:0060561">
    <property type="term" value="P:apoptotic process involved in morphogenesis"/>
    <property type="evidence" value="ECO:0000266"/>
    <property type="project" value="RGD"/>
</dbReference>
<dbReference type="GO" id="GO:0060670">
    <property type="term" value="P:branching involved in labyrinthine layer morphogenesis"/>
    <property type="evidence" value="ECO:0000266"/>
    <property type="project" value="RGD"/>
</dbReference>
<dbReference type="GO" id="GO:0060070">
    <property type="term" value="P:canonical Wnt signaling pathway"/>
    <property type="evidence" value="ECO:0000250"/>
    <property type="project" value="UniProtKB"/>
</dbReference>
<dbReference type="GO" id="GO:0071219">
    <property type="term" value="P:cellular response to molecule of bacterial origin"/>
    <property type="evidence" value="ECO:0000266"/>
    <property type="project" value="RGD"/>
</dbReference>
<dbReference type="GO" id="GO:0060718">
    <property type="term" value="P:chorionic trophoblast cell differentiation"/>
    <property type="evidence" value="ECO:0000266"/>
    <property type="project" value="RGD"/>
</dbReference>
<dbReference type="GO" id="GO:0000578">
    <property type="term" value="P:embryonic axis specification"/>
    <property type="evidence" value="ECO:0000266"/>
    <property type="project" value="RGD"/>
</dbReference>
<dbReference type="GO" id="GO:0031076">
    <property type="term" value="P:embryonic camera-type eye development"/>
    <property type="evidence" value="ECO:0000266"/>
    <property type="project" value="RGD"/>
</dbReference>
<dbReference type="GO" id="GO:0048596">
    <property type="term" value="P:embryonic camera-type eye morphogenesis"/>
    <property type="evidence" value="ECO:0000266"/>
    <property type="project" value="RGD"/>
</dbReference>
<dbReference type="GO" id="GO:0001654">
    <property type="term" value="P:eye development"/>
    <property type="evidence" value="ECO:0000250"/>
    <property type="project" value="UniProtKB"/>
</dbReference>
<dbReference type="GO" id="GO:0002071">
    <property type="term" value="P:glandular epithelial cell maturation"/>
    <property type="evidence" value="ECO:0000266"/>
    <property type="project" value="RGD"/>
</dbReference>
<dbReference type="GO" id="GO:0060574">
    <property type="term" value="P:intestinal epithelial cell maturation"/>
    <property type="evidence" value="ECO:0000266"/>
    <property type="project" value="RGD"/>
</dbReference>
<dbReference type="GO" id="GO:0060716">
    <property type="term" value="P:labyrinthine layer blood vessel development"/>
    <property type="evidence" value="ECO:0000266"/>
    <property type="project" value="RGD"/>
</dbReference>
<dbReference type="GO" id="GO:0008285">
    <property type="term" value="P:negative regulation of cell population proliferation"/>
    <property type="evidence" value="ECO:0000266"/>
    <property type="project" value="RGD"/>
</dbReference>
<dbReference type="GO" id="GO:0035567">
    <property type="term" value="P:non-canonical Wnt signaling pathway"/>
    <property type="evidence" value="ECO:0000250"/>
    <property type="project" value="UniProtKB"/>
</dbReference>
<dbReference type="GO" id="GO:0032731">
    <property type="term" value="P:positive regulation of interleukin-1 beta production"/>
    <property type="evidence" value="ECO:0000266"/>
    <property type="project" value="RGD"/>
</dbReference>
<dbReference type="GO" id="GO:0002726">
    <property type="term" value="P:positive regulation of T cell cytokine production"/>
    <property type="evidence" value="ECO:0000266"/>
    <property type="project" value="RGD"/>
</dbReference>
<dbReference type="GO" id="GO:0045944">
    <property type="term" value="P:positive regulation of transcription by RNA polymerase II"/>
    <property type="evidence" value="ECO:0000266"/>
    <property type="project" value="RGD"/>
</dbReference>
<dbReference type="GO" id="GO:0032760">
    <property type="term" value="P:positive regulation of tumor necrosis factor production"/>
    <property type="evidence" value="ECO:0000266"/>
    <property type="project" value="RGD"/>
</dbReference>
<dbReference type="GO" id="GO:0032729">
    <property type="term" value="P:positive regulation of type II interferon production"/>
    <property type="evidence" value="ECO:0000266"/>
    <property type="project" value="RGD"/>
</dbReference>
<dbReference type="GO" id="GO:0031077">
    <property type="term" value="P:post-embryonic camera-type eye development"/>
    <property type="evidence" value="ECO:0000266"/>
    <property type="project" value="RGD"/>
</dbReference>
<dbReference type="GO" id="GO:0099054">
    <property type="term" value="P:presynapse assembly"/>
    <property type="evidence" value="ECO:0000314"/>
    <property type="project" value="SynGO"/>
</dbReference>
<dbReference type="GO" id="GO:2000810">
    <property type="term" value="P:regulation of bicellular tight junction assembly"/>
    <property type="evidence" value="ECO:0000266"/>
    <property type="project" value="RGD"/>
</dbReference>
<dbReference type="GO" id="GO:1901382">
    <property type="term" value="P:regulation of chorionic trophoblast cell proliferation"/>
    <property type="evidence" value="ECO:0000266"/>
    <property type="project" value="RGD"/>
</dbReference>
<dbReference type="GO" id="GO:0060061">
    <property type="term" value="P:Spemann organizer formation"/>
    <property type="evidence" value="ECO:0000266"/>
    <property type="project" value="RGD"/>
</dbReference>
<dbReference type="GO" id="GO:0060715">
    <property type="term" value="P:syncytiotrophoblast cell differentiation involved in labyrinthine layer development"/>
    <property type="evidence" value="ECO:0000266"/>
    <property type="project" value="RGD"/>
</dbReference>
<dbReference type="GO" id="GO:0033077">
    <property type="term" value="P:T cell differentiation in thymus"/>
    <property type="evidence" value="ECO:0000266"/>
    <property type="project" value="RGD"/>
</dbReference>
<dbReference type="GO" id="GO:0001944">
    <property type="term" value="P:vasculature development"/>
    <property type="evidence" value="ECO:0000266"/>
    <property type="project" value="RGD"/>
</dbReference>
<dbReference type="GO" id="GO:0016055">
    <property type="term" value="P:Wnt signaling pathway"/>
    <property type="evidence" value="ECO:0000266"/>
    <property type="project" value="RGD"/>
</dbReference>
<dbReference type="CDD" id="cd07460">
    <property type="entry name" value="CRD_FZ5"/>
    <property type="match status" value="1"/>
</dbReference>
<dbReference type="FunFam" id="1.10.2000.10:FF:000004">
    <property type="entry name" value="Frizzled class receptor 8a"/>
    <property type="match status" value="1"/>
</dbReference>
<dbReference type="FunFam" id="1.20.1070.10:FF:000053">
    <property type="entry name" value="Frizzled class receptor 8a"/>
    <property type="match status" value="1"/>
</dbReference>
<dbReference type="Gene3D" id="1.10.2000.10">
    <property type="entry name" value="Frizzled cysteine-rich domain"/>
    <property type="match status" value="1"/>
</dbReference>
<dbReference type="Gene3D" id="1.20.1070.10">
    <property type="entry name" value="Rhodopsin 7-helix transmembrane proteins"/>
    <property type="match status" value="1"/>
</dbReference>
<dbReference type="InterPro" id="IPR015526">
    <property type="entry name" value="Frizzled/SFRP"/>
</dbReference>
<dbReference type="InterPro" id="IPR000539">
    <property type="entry name" value="Frizzled/Smoothened_7TM"/>
</dbReference>
<dbReference type="InterPro" id="IPR020067">
    <property type="entry name" value="Frizzled_dom"/>
</dbReference>
<dbReference type="InterPro" id="IPR036790">
    <property type="entry name" value="Frizzled_dom_sf"/>
</dbReference>
<dbReference type="InterPro" id="IPR037441">
    <property type="entry name" value="FZ5_CRD"/>
</dbReference>
<dbReference type="InterPro" id="IPR017981">
    <property type="entry name" value="GPCR_2-like_7TM"/>
</dbReference>
<dbReference type="PANTHER" id="PTHR11309">
    <property type="entry name" value="FRIZZLED"/>
    <property type="match status" value="1"/>
</dbReference>
<dbReference type="PANTHER" id="PTHR11309:SF136">
    <property type="entry name" value="FRIZZLED-5"/>
    <property type="match status" value="1"/>
</dbReference>
<dbReference type="Pfam" id="PF01534">
    <property type="entry name" value="Frizzled"/>
    <property type="match status" value="1"/>
</dbReference>
<dbReference type="Pfam" id="PF01392">
    <property type="entry name" value="Fz"/>
    <property type="match status" value="1"/>
</dbReference>
<dbReference type="PRINTS" id="PR00489">
    <property type="entry name" value="FRIZZLED"/>
</dbReference>
<dbReference type="SMART" id="SM00063">
    <property type="entry name" value="FRI"/>
    <property type="match status" value="1"/>
</dbReference>
<dbReference type="SMART" id="SM01330">
    <property type="entry name" value="Frizzled"/>
    <property type="match status" value="1"/>
</dbReference>
<dbReference type="SUPFAM" id="SSF63501">
    <property type="entry name" value="Frizzled cysteine-rich domain"/>
    <property type="match status" value="1"/>
</dbReference>
<dbReference type="PROSITE" id="PS50038">
    <property type="entry name" value="FZ"/>
    <property type="match status" value="1"/>
</dbReference>
<dbReference type="PROSITE" id="PS50261">
    <property type="entry name" value="G_PROTEIN_RECEP_F2_4"/>
    <property type="match status" value="1"/>
</dbReference>
<comment type="function">
    <text evidence="2 3 7">Receptor for Wnt proteins (PubMed:20530549). Functions in the canonical Wnt/beta-catenin signaling pathway (PubMed:20530549). In vitro activates WNT2, WNT10B, WNT5A, but not WNT2B or WNT4 signaling (By similarity). In neurons, activation by WNT7A promotes formation of synapses (PubMed:20530549). May be involved in transduction and intercellular transmission of polarity information during tissue morphogenesis and/or in differentiated tissues (Probable). Plays a role in yolk sac angiogenesis and in placental vascularization (By similarity). Plays a role in ocular development (By similarity).</text>
</comment>
<comment type="subunit">
    <text evidence="2 3">Binding of unsaturated fatty acid molecules (via FZ domain) promotes homodimerization (via FZ domain). Interacts with WNT2B (By similarity). Interacts with WNT7A. Interacts with GOPC (By similarity).</text>
</comment>
<comment type="subcellular location">
    <subcellularLocation>
        <location evidence="7">Cell membrane</location>
        <topology evidence="8">Multi-pass membrane protein</topology>
    </subcellularLocation>
    <subcellularLocation>
        <location evidence="3">Golgi apparatus membrane</location>
        <topology evidence="3">Multi-pass membrane protein</topology>
    </subcellularLocation>
    <subcellularLocation>
        <location evidence="7">Synapse</location>
    </subcellularLocation>
    <subcellularLocation>
        <location evidence="7">Perikaryon</location>
    </subcellularLocation>
    <subcellularLocation>
        <location evidence="7">Cell projection</location>
        <location evidence="7">Dendrite</location>
    </subcellularLocation>
    <subcellularLocation>
        <location evidence="7">Cell projection</location>
        <location evidence="7">Axon</location>
    </subcellularLocation>
    <text evidence="3">Localized at the plasma membrane and also found at the Golgi apparatus.</text>
</comment>
<comment type="domain">
    <text evidence="1">The PDZ-binding motif mediates interaction with GOPC.</text>
</comment>
<comment type="domain">
    <text evidence="1">Lys-Thr-X-X-X-Trp motif interacts with the PDZ domain of Dvl (Disheveled) family members and is involved in the activation of the Wnt/beta-catenin signaling pathway.</text>
</comment>
<comment type="domain">
    <text evidence="1">The FZ domain is involved in binding with Wnt ligands.</text>
</comment>
<comment type="PTM">
    <text evidence="2">Ubiquitinated by RNF43 and ZNRF3, leading to its degradation by the proteasome.</text>
</comment>
<comment type="similarity">
    <text evidence="8">Belongs to the G-protein coupled receptor Fz/Smo family.</text>
</comment>
<keyword id="KW-1003">Cell membrane</keyword>
<keyword id="KW-0966">Cell projection</keyword>
<keyword id="KW-0217">Developmental protein</keyword>
<keyword id="KW-1015">Disulfide bond</keyword>
<keyword id="KW-0297">G-protein coupled receptor</keyword>
<keyword id="KW-0325">Glycoprotein</keyword>
<keyword id="KW-0333">Golgi apparatus</keyword>
<keyword id="KW-0446">Lipid-binding</keyword>
<keyword id="KW-0472">Membrane</keyword>
<keyword id="KW-0675">Receptor</keyword>
<keyword id="KW-1185">Reference proteome</keyword>
<keyword id="KW-0732">Signal</keyword>
<keyword id="KW-0770">Synapse</keyword>
<keyword id="KW-0807">Transducer</keyword>
<keyword id="KW-0812">Transmembrane</keyword>
<keyword id="KW-1133">Transmembrane helix</keyword>
<keyword id="KW-0832">Ubl conjugation</keyword>
<keyword id="KW-0879">Wnt signaling pathway</keyword>
<protein>
    <recommendedName>
        <fullName>Frizzled-5</fullName>
        <shortName>Fz-5</shortName>
    </recommendedName>
</protein>
<organism>
    <name type="scientific">Rattus norvegicus</name>
    <name type="common">Rat</name>
    <dbReference type="NCBI Taxonomy" id="10116"/>
    <lineage>
        <taxon>Eukaryota</taxon>
        <taxon>Metazoa</taxon>
        <taxon>Chordata</taxon>
        <taxon>Craniata</taxon>
        <taxon>Vertebrata</taxon>
        <taxon>Euteleostomi</taxon>
        <taxon>Mammalia</taxon>
        <taxon>Eutheria</taxon>
        <taxon>Euarchontoglires</taxon>
        <taxon>Glires</taxon>
        <taxon>Rodentia</taxon>
        <taxon>Myomorpha</taxon>
        <taxon>Muroidea</taxon>
        <taxon>Muridae</taxon>
        <taxon>Murinae</taxon>
        <taxon>Rattus</taxon>
    </lineage>
</organism>
<reference key="1">
    <citation type="submission" date="2000-12" db="EMBL/GenBank/DDBJ databases">
        <title>Molecular cloning and characterization of a gene encoding for rat Frizzled 5.</title>
        <authorList>
            <person name="Ito S."/>
            <person name="Imamura T."/>
            <person name="Shiota K."/>
        </authorList>
    </citation>
    <scope>NUCLEOTIDE SEQUENCE [MRNA]</scope>
</reference>
<reference key="2">
    <citation type="journal article" date="2010" name="Development">
        <title>Frizzled-5, a receptor for the synaptic organizer Wnt7a, regulates activity-mediated synaptogenesis.</title>
        <authorList>
            <person name="Sahores M."/>
            <person name="Gibb A."/>
            <person name="Salinas P.C."/>
        </authorList>
    </citation>
    <scope>FUNCTION</scope>
    <scope>SUBCELLULAR LOCATION</scope>
</reference>
<name>FZD5_RAT</name>